<name>PAG74_BISBI</name>
<dbReference type="EC" id="3.4.23.-"/>
<dbReference type="GO" id="GO:0005576">
    <property type="term" value="C:extracellular region"/>
    <property type="evidence" value="ECO:0007669"/>
    <property type="project" value="UniProtKB-SubCell"/>
</dbReference>
<dbReference type="GO" id="GO:0004190">
    <property type="term" value="F:aspartic-type endopeptidase activity"/>
    <property type="evidence" value="ECO:0007669"/>
    <property type="project" value="UniProtKB-KW"/>
</dbReference>
<dbReference type="GO" id="GO:0006508">
    <property type="term" value="P:proteolysis"/>
    <property type="evidence" value="ECO:0007669"/>
    <property type="project" value="UniProtKB-KW"/>
</dbReference>
<comment type="subcellular location">
    <subcellularLocation>
        <location>Secreted</location>
        <location>Extracellular space</location>
    </subcellularLocation>
</comment>
<comment type="tissue specificity">
    <text evidence="2">Placental cotyledons.</text>
</comment>
<comment type="developmental stage">
    <text evidence="2">Expressed between month 3 and month 4 of pregnancy.</text>
</comment>
<comment type="PTM">
    <text evidence="2">N-glycosylated.</text>
</comment>
<comment type="similarity">
    <text evidence="1">Belongs to the peptidase A1 family.</text>
</comment>
<evidence type="ECO:0000255" key="1"/>
<evidence type="ECO:0000269" key="2">
    <source>
    </source>
</evidence>
<protein>
    <recommendedName>
        <fullName>Pregnancy-associated glycoprotein 74</fullName>
        <ecNumber>3.4.23.-</ecNumber>
    </recommendedName>
    <alternativeName>
        <fullName>AmbPAG 74 kDa</fullName>
    </alternativeName>
</protein>
<sequence length="25" mass="2840">RGSNLTIHPLRNIRDIFYVGNITIG</sequence>
<feature type="chain" id="PRO_0000249181" description="Pregnancy-associated glycoprotein 74">
    <location>
        <begin position="1"/>
        <end position="25" status="greater than"/>
    </location>
</feature>
<feature type="glycosylation site" description="N-linked (GlcNAc...) asparagine" evidence="1">
    <location>
        <position position="4"/>
    </location>
</feature>
<feature type="glycosylation site" description="N-linked (GlcNAc...) asparagine" evidence="1">
    <location>
        <position position="21"/>
    </location>
</feature>
<feature type="non-terminal residue">
    <location>
        <position position="25"/>
    </location>
</feature>
<organism>
    <name type="scientific">Bison bison</name>
    <name type="common">American bison</name>
    <name type="synonym">Bos bison</name>
    <dbReference type="NCBI Taxonomy" id="9901"/>
    <lineage>
        <taxon>Eukaryota</taxon>
        <taxon>Metazoa</taxon>
        <taxon>Chordata</taxon>
        <taxon>Craniata</taxon>
        <taxon>Vertebrata</taxon>
        <taxon>Euteleostomi</taxon>
        <taxon>Mammalia</taxon>
        <taxon>Eutheria</taxon>
        <taxon>Laurasiatheria</taxon>
        <taxon>Artiodactyla</taxon>
        <taxon>Ruminantia</taxon>
        <taxon>Pecora</taxon>
        <taxon>Bovidae</taxon>
        <taxon>Bovinae</taxon>
        <taxon>Bison</taxon>
    </lineage>
</organism>
<accession>P84917</accession>
<keyword id="KW-0064">Aspartyl protease</keyword>
<keyword id="KW-0903">Direct protein sequencing</keyword>
<keyword id="KW-0325">Glycoprotein</keyword>
<keyword id="KW-0378">Hydrolase</keyword>
<keyword id="KW-0645">Protease</keyword>
<keyword id="KW-0964">Secreted</keyword>
<reference key="1">
    <citation type="journal article" date="2008" name="Gen. Comp. Endocrinol.">
        <title>Isolation of pregnancy-associated glycoproteins from placenta of the American bison (Bison bison) at first half of pregnancy.</title>
        <authorList>
            <person name="Kiewisz J."/>
            <person name="Melo de Sousa N."/>
            <person name="Beckers J.-F.M.P."/>
            <person name="Vervaecke H."/>
            <person name="Panasiewicz G."/>
            <person name="Szafranska B."/>
        </authorList>
    </citation>
    <scope>PROTEIN SEQUENCE</scope>
    <scope>TISSUE SPECIFICITY</scope>
    <scope>DEVELOPMENTAL STAGE</scope>
    <scope>GLYCOSYLATION</scope>
    <source>
        <tissue>Placenta</tissue>
    </source>
</reference>
<proteinExistence type="evidence at protein level"/>